<comment type="function">
    <text>The primary product of this enzyme is 4,2',4',6'-tetrahydroxychalcone (also termed naringenin-chalcone or chalcone) which can under specific conditions spontaneously isomerize into naringenin.</text>
</comment>
<comment type="catalytic activity">
    <reaction evidence="1">
        <text>(E)-4-coumaroyl-CoA + 3 malonyl-CoA + 3 H(+) = 2',4,4',6'-tetrahydroxychalcone + 3 CO2 + 4 CoA</text>
        <dbReference type="Rhea" id="RHEA:11128"/>
        <dbReference type="ChEBI" id="CHEBI:15378"/>
        <dbReference type="ChEBI" id="CHEBI:15413"/>
        <dbReference type="ChEBI" id="CHEBI:16526"/>
        <dbReference type="ChEBI" id="CHEBI:57287"/>
        <dbReference type="ChEBI" id="CHEBI:57384"/>
        <dbReference type="ChEBI" id="CHEBI:85008"/>
        <dbReference type="EC" id="2.3.1.74"/>
    </reaction>
</comment>
<comment type="pathway">
    <text>Secondary metabolite biosynthesis; flavonoid biosynthesis.</text>
</comment>
<comment type="tissue specificity">
    <text>Expressed in seedlings after illumination with UV light. No expression detectable in flowers. It is not known for sure whether CHSG encodes a chalcone synthase or a very closely related condensing enzyme.</text>
</comment>
<comment type="similarity">
    <text evidence="2">Belongs to the thiolase-like superfamily. Chalcone/stilbene synthases family.</text>
</comment>
<name>CHSG_PETHY</name>
<keyword id="KW-0012">Acyltransferase</keyword>
<keyword id="KW-0284">Flavonoid biosynthesis</keyword>
<keyword id="KW-0808">Transferase</keyword>
<evidence type="ECO:0000255" key="1">
    <source>
        <dbReference type="PROSITE-ProRule" id="PRU10023"/>
    </source>
</evidence>
<evidence type="ECO:0000305" key="2"/>
<proteinExistence type="evidence at transcript level"/>
<dbReference type="EC" id="2.3.1.74"/>
<dbReference type="EMBL" id="X14595">
    <property type="protein sequence ID" value="CAA32735.1"/>
    <property type="molecule type" value="Genomic_DNA"/>
</dbReference>
<dbReference type="PIR" id="C72821">
    <property type="entry name" value="SYPJCG"/>
</dbReference>
<dbReference type="SMR" id="P22927"/>
<dbReference type="UniPathway" id="UPA00154"/>
<dbReference type="GO" id="GO:0016210">
    <property type="term" value="F:naringenin-chalcone synthase activity"/>
    <property type="evidence" value="ECO:0007669"/>
    <property type="project" value="UniProtKB-EC"/>
</dbReference>
<dbReference type="GO" id="GO:0009813">
    <property type="term" value="P:flavonoid biosynthetic process"/>
    <property type="evidence" value="ECO:0007669"/>
    <property type="project" value="UniProtKB-UniPathway"/>
</dbReference>
<dbReference type="GO" id="GO:0030639">
    <property type="term" value="P:polyketide biosynthetic process"/>
    <property type="evidence" value="ECO:0007669"/>
    <property type="project" value="TreeGrafter"/>
</dbReference>
<dbReference type="CDD" id="cd00831">
    <property type="entry name" value="CHS_like"/>
    <property type="match status" value="1"/>
</dbReference>
<dbReference type="FunFam" id="3.40.47.10:FF:000014">
    <property type="entry name" value="Chalcone synthase 1"/>
    <property type="match status" value="1"/>
</dbReference>
<dbReference type="FunFam" id="3.40.47.10:FF:000025">
    <property type="entry name" value="Chalcone synthase 2"/>
    <property type="match status" value="1"/>
</dbReference>
<dbReference type="Gene3D" id="3.40.47.10">
    <property type="match status" value="2"/>
</dbReference>
<dbReference type="InterPro" id="IPR012328">
    <property type="entry name" value="Chalcone/stilbene_synt_C"/>
</dbReference>
<dbReference type="InterPro" id="IPR001099">
    <property type="entry name" value="Chalcone/stilbene_synt_N"/>
</dbReference>
<dbReference type="InterPro" id="IPR018088">
    <property type="entry name" value="Chalcone/stilbene_synthase_AS"/>
</dbReference>
<dbReference type="InterPro" id="IPR011141">
    <property type="entry name" value="Polyketide_synthase_type-III"/>
</dbReference>
<dbReference type="InterPro" id="IPR016039">
    <property type="entry name" value="Thiolase-like"/>
</dbReference>
<dbReference type="PANTHER" id="PTHR11877:SF51">
    <property type="entry name" value="CHALCONE SYNTHASE"/>
    <property type="match status" value="1"/>
</dbReference>
<dbReference type="PANTHER" id="PTHR11877">
    <property type="entry name" value="HYDROXYMETHYLGLUTARYL-COA SYNTHASE"/>
    <property type="match status" value="1"/>
</dbReference>
<dbReference type="Pfam" id="PF02797">
    <property type="entry name" value="Chal_sti_synt_C"/>
    <property type="match status" value="1"/>
</dbReference>
<dbReference type="Pfam" id="PF00195">
    <property type="entry name" value="Chal_sti_synt_N"/>
    <property type="match status" value="1"/>
</dbReference>
<dbReference type="PIRSF" id="PIRSF000451">
    <property type="entry name" value="PKS_III"/>
    <property type="match status" value="1"/>
</dbReference>
<dbReference type="SUPFAM" id="SSF53901">
    <property type="entry name" value="Thiolase-like"/>
    <property type="match status" value="2"/>
</dbReference>
<dbReference type="PROSITE" id="PS00441">
    <property type="entry name" value="CHALCONE_SYNTH"/>
    <property type="match status" value="1"/>
</dbReference>
<accession>P22927</accession>
<organism>
    <name type="scientific">Petunia hybrida</name>
    <name type="common">Petunia</name>
    <dbReference type="NCBI Taxonomy" id="4102"/>
    <lineage>
        <taxon>Eukaryota</taxon>
        <taxon>Viridiplantae</taxon>
        <taxon>Streptophyta</taxon>
        <taxon>Embryophyta</taxon>
        <taxon>Tracheophyta</taxon>
        <taxon>Spermatophyta</taxon>
        <taxon>Magnoliopsida</taxon>
        <taxon>eudicotyledons</taxon>
        <taxon>Gunneridae</taxon>
        <taxon>Pentapetalae</taxon>
        <taxon>asterids</taxon>
        <taxon>lamiids</taxon>
        <taxon>Solanales</taxon>
        <taxon>Solanaceae</taxon>
        <taxon>Petunioideae</taxon>
        <taxon>Petunia</taxon>
    </lineage>
</organism>
<gene>
    <name type="primary">CHSG</name>
</gene>
<reference key="1">
    <citation type="journal article" date="1989" name="Gene">
        <title>Cloning and molecular characterization of the chalcone synthase multigene family of Petunia hybrida.</title>
        <authorList>
            <person name="Koes R.E."/>
            <person name="Spelt C.E."/>
            <person name="van den Elzen P.J.M."/>
            <person name="Mol J.N.M."/>
        </authorList>
    </citation>
    <scope>NUCLEOTIDE SEQUENCE [GENOMIC DNA]</scope>
    <source>
        <strain>cv. Violet 30</strain>
        <tissue>Leaf</tissue>
    </source>
</reference>
<feature type="chain" id="PRO_0000216033" description="Chalcone synthase G">
    <location>
        <begin position="1"/>
        <end position="393"/>
    </location>
</feature>
<feature type="active site" evidence="1">
    <location>
        <position position="164"/>
    </location>
</feature>
<sequence length="393" mass="42828">MATVEEIRKAQRAEGPATVLAIGTANPSNCVDQSAYPDFLFRITTSDHKTELKEKFKHMCEGSMIKKRYLHLTEEILKNNPNICEHKAPSLNARQEIAVAEAPKLGKRAAQKAIEEWSQSKSKITHLVFCTTTSVELPGADYQLTKLLGLSPSVKRSMMYQQGCYGGGTALRLAKDLAENNKGARVLVVCVEITVMSFQAPSRNDTDELDVLVGQALFADGASAVIIGSDPILAIEKPLFELVFATQTLIPDSGHVICANLTEAGLIPHLLKDAPIVISQNIERRLVEVFKPLGISDWNSIFWVAHPGGPAILNQIELKLGLKPEKLRAARHVLSEYGNMSSACVLFVLDEMRKGTIEKGMGTTGEGLEWGLLFGFGPGLTIETVVLHSVSIN</sequence>
<protein>
    <recommendedName>
        <fullName>Chalcone synthase G</fullName>
        <ecNumber>2.3.1.74</ecNumber>
    </recommendedName>
    <alternativeName>
        <fullName>Naringenin-chalcone synthase G</fullName>
    </alternativeName>
</protein>